<gene>
    <name evidence="1" type="primary">rpsB</name>
    <name type="ordered locus">Tola_2111</name>
</gene>
<organism>
    <name type="scientific">Tolumonas auensis (strain DSM 9187 / NBRC 110442 / TA 4)</name>
    <dbReference type="NCBI Taxonomy" id="595494"/>
    <lineage>
        <taxon>Bacteria</taxon>
        <taxon>Pseudomonadati</taxon>
        <taxon>Pseudomonadota</taxon>
        <taxon>Gammaproteobacteria</taxon>
        <taxon>Aeromonadales</taxon>
        <taxon>Aeromonadaceae</taxon>
        <taxon>Tolumonas</taxon>
    </lineage>
</organism>
<evidence type="ECO:0000255" key="1">
    <source>
        <dbReference type="HAMAP-Rule" id="MF_00291"/>
    </source>
</evidence>
<evidence type="ECO:0000305" key="2"/>
<keyword id="KW-1185">Reference proteome</keyword>
<keyword id="KW-0687">Ribonucleoprotein</keyword>
<keyword id="KW-0689">Ribosomal protein</keyword>
<sequence>MAKVSMRDMLQAGVHFGHQTRFWNPKMKPFIFGARNNVHIINLEKTVPMFDDALNYLSSVASKKGKILFVGTKRAATEAVKEAAANCEQFYVNHRWLGGMLTNWKTVRQSIKRLKDLEAQSLDGTFEKLTKKEALMRTREMEKLEKSLGGIKDMGGLPDVLFVIDADHEHIAIKEANNLGIPVVSIVDTNSNPDGVDYIIPGNDDAIRAVQLYLNAAADSIKTARELDIVVQAEQDGFVEAN</sequence>
<feature type="chain" id="PRO_1000204896" description="Small ribosomal subunit protein uS2">
    <location>
        <begin position="1"/>
        <end position="242"/>
    </location>
</feature>
<name>RS2_TOLAT</name>
<reference key="1">
    <citation type="submission" date="2009-05" db="EMBL/GenBank/DDBJ databases">
        <title>Complete sequence of Tolumonas auensis DSM 9187.</title>
        <authorList>
            <consortium name="US DOE Joint Genome Institute"/>
            <person name="Lucas S."/>
            <person name="Copeland A."/>
            <person name="Lapidus A."/>
            <person name="Glavina del Rio T."/>
            <person name="Tice H."/>
            <person name="Bruce D."/>
            <person name="Goodwin L."/>
            <person name="Pitluck S."/>
            <person name="Chertkov O."/>
            <person name="Brettin T."/>
            <person name="Detter J.C."/>
            <person name="Han C."/>
            <person name="Larimer F."/>
            <person name="Land M."/>
            <person name="Hauser L."/>
            <person name="Kyrpides N."/>
            <person name="Mikhailova N."/>
            <person name="Spring S."/>
            <person name="Beller H."/>
        </authorList>
    </citation>
    <scope>NUCLEOTIDE SEQUENCE [LARGE SCALE GENOMIC DNA]</scope>
    <source>
        <strain>DSM 9187 / NBRC 110442 / TA 4</strain>
    </source>
</reference>
<dbReference type="EMBL" id="CP001616">
    <property type="protein sequence ID" value="ACQ93710.1"/>
    <property type="molecule type" value="Genomic_DNA"/>
</dbReference>
<dbReference type="RefSeq" id="WP_015879178.1">
    <property type="nucleotide sequence ID" value="NC_012691.1"/>
</dbReference>
<dbReference type="SMR" id="C4L864"/>
<dbReference type="STRING" id="595494.Tola_2111"/>
<dbReference type="KEGG" id="tau:Tola_2111"/>
<dbReference type="eggNOG" id="COG0052">
    <property type="taxonomic scope" value="Bacteria"/>
</dbReference>
<dbReference type="HOGENOM" id="CLU_040318_1_2_6"/>
<dbReference type="OrthoDB" id="9808036at2"/>
<dbReference type="Proteomes" id="UP000009073">
    <property type="component" value="Chromosome"/>
</dbReference>
<dbReference type="GO" id="GO:0022627">
    <property type="term" value="C:cytosolic small ribosomal subunit"/>
    <property type="evidence" value="ECO:0007669"/>
    <property type="project" value="TreeGrafter"/>
</dbReference>
<dbReference type="GO" id="GO:0003735">
    <property type="term" value="F:structural constituent of ribosome"/>
    <property type="evidence" value="ECO:0007669"/>
    <property type="project" value="InterPro"/>
</dbReference>
<dbReference type="GO" id="GO:0006412">
    <property type="term" value="P:translation"/>
    <property type="evidence" value="ECO:0007669"/>
    <property type="project" value="UniProtKB-UniRule"/>
</dbReference>
<dbReference type="CDD" id="cd01425">
    <property type="entry name" value="RPS2"/>
    <property type="match status" value="1"/>
</dbReference>
<dbReference type="FunFam" id="1.10.287.610:FF:000001">
    <property type="entry name" value="30S ribosomal protein S2"/>
    <property type="match status" value="1"/>
</dbReference>
<dbReference type="Gene3D" id="3.40.50.10490">
    <property type="entry name" value="Glucose-6-phosphate isomerase like protein, domain 1"/>
    <property type="match status" value="1"/>
</dbReference>
<dbReference type="Gene3D" id="1.10.287.610">
    <property type="entry name" value="Helix hairpin bin"/>
    <property type="match status" value="1"/>
</dbReference>
<dbReference type="HAMAP" id="MF_00291_B">
    <property type="entry name" value="Ribosomal_uS2_B"/>
    <property type="match status" value="1"/>
</dbReference>
<dbReference type="InterPro" id="IPR001865">
    <property type="entry name" value="Ribosomal_uS2"/>
</dbReference>
<dbReference type="InterPro" id="IPR005706">
    <property type="entry name" value="Ribosomal_uS2_bac/mit/plastid"/>
</dbReference>
<dbReference type="InterPro" id="IPR018130">
    <property type="entry name" value="Ribosomal_uS2_CS"/>
</dbReference>
<dbReference type="InterPro" id="IPR023591">
    <property type="entry name" value="Ribosomal_uS2_flav_dom_sf"/>
</dbReference>
<dbReference type="NCBIfam" id="TIGR01011">
    <property type="entry name" value="rpsB_bact"/>
    <property type="match status" value="1"/>
</dbReference>
<dbReference type="PANTHER" id="PTHR12534">
    <property type="entry name" value="30S RIBOSOMAL PROTEIN S2 PROKARYOTIC AND ORGANELLAR"/>
    <property type="match status" value="1"/>
</dbReference>
<dbReference type="PANTHER" id="PTHR12534:SF0">
    <property type="entry name" value="SMALL RIBOSOMAL SUBUNIT PROTEIN US2M"/>
    <property type="match status" value="1"/>
</dbReference>
<dbReference type="Pfam" id="PF00318">
    <property type="entry name" value="Ribosomal_S2"/>
    <property type="match status" value="1"/>
</dbReference>
<dbReference type="PRINTS" id="PR00395">
    <property type="entry name" value="RIBOSOMALS2"/>
</dbReference>
<dbReference type="SUPFAM" id="SSF52313">
    <property type="entry name" value="Ribosomal protein S2"/>
    <property type="match status" value="1"/>
</dbReference>
<dbReference type="PROSITE" id="PS00962">
    <property type="entry name" value="RIBOSOMAL_S2_1"/>
    <property type="match status" value="1"/>
</dbReference>
<dbReference type="PROSITE" id="PS00963">
    <property type="entry name" value="RIBOSOMAL_S2_2"/>
    <property type="match status" value="1"/>
</dbReference>
<comment type="similarity">
    <text evidence="1">Belongs to the universal ribosomal protein uS2 family.</text>
</comment>
<protein>
    <recommendedName>
        <fullName evidence="1">Small ribosomal subunit protein uS2</fullName>
    </recommendedName>
    <alternativeName>
        <fullName evidence="2">30S ribosomal protein S2</fullName>
    </alternativeName>
</protein>
<proteinExistence type="inferred from homology"/>
<accession>C4L864</accession>